<feature type="chain" id="PRO_1000004836" description="S-ribosylhomocysteine lyase">
    <location>
        <begin position="1"/>
        <end position="157"/>
    </location>
</feature>
<feature type="binding site" evidence="1">
    <location>
        <position position="54"/>
    </location>
    <ligand>
        <name>Fe cation</name>
        <dbReference type="ChEBI" id="CHEBI:24875"/>
    </ligand>
</feature>
<feature type="binding site" evidence="1">
    <location>
        <position position="58"/>
    </location>
    <ligand>
        <name>Fe cation</name>
        <dbReference type="ChEBI" id="CHEBI:24875"/>
    </ligand>
</feature>
<feature type="binding site" evidence="1">
    <location>
        <position position="126"/>
    </location>
    <ligand>
        <name>Fe cation</name>
        <dbReference type="ChEBI" id="CHEBI:24875"/>
    </ligand>
</feature>
<name>LUXS_BACVZ</name>
<protein>
    <recommendedName>
        <fullName evidence="1">S-ribosylhomocysteine lyase</fullName>
        <ecNumber evidence="1">4.4.1.21</ecNumber>
    </recommendedName>
    <alternativeName>
        <fullName evidence="1">AI-2 synthesis protein</fullName>
    </alternativeName>
    <alternativeName>
        <fullName evidence="1">Autoinducer-2 production protein LuxS</fullName>
    </alternativeName>
</protein>
<reference key="1">
    <citation type="journal article" date="2007" name="Nat. Biotechnol.">
        <title>Comparative analysis of the complete genome sequence of the plant growth-promoting bacterium Bacillus amyloliquefaciens FZB42.</title>
        <authorList>
            <person name="Chen X.H."/>
            <person name="Koumoutsi A."/>
            <person name="Scholz R."/>
            <person name="Eisenreich A."/>
            <person name="Schneider K."/>
            <person name="Heinemeyer I."/>
            <person name="Morgenstern B."/>
            <person name="Voss B."/>
            <person name="Hess W.R."/>
            <person name="Reva O."/>
            <person name="Junge H."/>
            <person name="Voigt B."/>
            <person name="Jungblut P.R."/>
            <person name="Vater J."/>
            <person name="Suessmuth R."/>
            <person name="Liesegang H."/>
            <person name="Strittmatter A."/>
            <person name="Gottschalk G."/>
            <person name="Borriss R."/>
        </authorList>
    </citation>
    <scope>NUCLEOTIDE SEQUENCE [LARGE SCALE GENOMIC DNA]</scope>
    <source>
        <strain>DSM 23117 / BGSC 10A6 / LMG 26770 / FZB42</strain>
    </source>
</reference>
<accession>A7Z800</accession>
<proteinExistence type="inferred from homology"/>
<evidence type="ECO:0000255" key="1">
    <source>
        <dbReference type="HAMAP-Rule" id="MF_00091"/>
    </source>
</evidence>
<keyword id="KW-0071">Autoinducer synthesis</keyword>
<keyword id="KW-0408">Iron</keyword>
<keyword id="KW-0456">Lyase</keyword>
<keyword id="KW-0479">Metal-binding</keyword>
<keyword id="KW-0673">Quorum sensing</keyword>
<gene>
    <name evidence="1" type="primary">luxS</name>
    <name type="ordered locus">RBAM_027680</name>
</gene>
<sequence length="157" mass="17696">MPSVESFELDHNAVVAPYVRHCGVHKVGTDGVVNKFDIRFCQPNKQAMKPDTIHTLEHLLAFTIRTHSEKYDHFDIIDISPMGCQTGYYLVVSGEPTAEEIVDLLDATLKEAIDITEIPAANEKQCGQAKLHDLEGAKRLMRFWLSQDKEDLLKVFG</sequence>
<organism>
    <name type="scientific">Bacillus velezensis (strain DSM 23117 / BGSC 10A6 / LMG 26770 / FZB42)</name>
    <name type="common">Bacillus amyloliquefaciens subsp. plantarum</name>
    <dbReference type="NCBI Taxonomy" id="326423"/>
    <lineage>
        <taxon>Bacteria</taxon>
        <taxon>Bacillati</taxon>
        <taxon>Bacillota</taxon>
        <taxon>Bacilli</taxon>
        <taxon>Bacillales</taxon>
        <taxon>Bacillaceae</taxon>
        <taxon>Bacillus</taxon>
        <taxon>Bacillus amyloliquefaciens group</taxon>
    </lineage>
</organism>
<dbReference type="EC" id="4.4.1.21" evidence="1"/>
<dbReference type="EMBL" id="CP000560">
    <property type="protein sequence ID" value="ABS75126.1"/>
    <property type="molecule type" value="Genomic_DNA"/>
</dbReference>
<dbReference type="RefSeq" id="WP_003152237.1">
    <property type="nucleotide sequence ID" value="NC_009725.2"/>
</dbReference>
<dbReference type="SMR" id="A7Z800"/>
<dbReference type="GeneID" id="93081910"/>
<dbReference type="KEGG" id="bay:RBAM_027680"/>
<dbReference type="HOGENOM" id="CLU_107531_2_0_9"/>
<dbReference type="Proteomes" id="UP000001120">
    <property type="component" value="Chromosome"/>
</dbReference>
<dbReference type="GO" id="GO:0005506">
    <property type="term" value="F:iron ion binding"/>
    <property type="evidence" value="ECO:0007669"/>
    <property type="project" value="InterPro"/>
</dbReference>
<dbReference type="GO" id="GO:0043768">
    <property type="term" value="F:S-ribosylhomocysteine lyase activity"/>
    <property type="evidence" value="ECO:0007669"/>
    <property type="project" value="UniProtKB-UniRule"/>
</dbReference>
<dbReference type="GO" id="GO:0009372">
    <property type="term" value="P:quorum sensing"/>
    <property type="evidence" value="ECO:0007669"/>
    <property type="project" value="UniProtKB-UniRule"/>
</dbReference>
<dbReference type="Gene3D" id="3.30.1360.80">
    <property type="entry name" value="S-ribosylhomocysteinase (LuxS)"/>
    <property type="match status" value="1"/>
</dbReference>
<dbReference type="HAMAP" id="MF_00091">
    <property type="entry name" value="LuxS"/>
    <property type="match status" value="1"/>
</dbReference>
<dbReference type="InterPro" id="IPR037005">
    <property type="entry name" value="LuxS_sf"/>
</dbReference>
<dbReference type="InterPro" id="IPR011249">
    <property type="entry name" value="Metalloenz_LuxS/M16"/>
</dbReference>
<dbReference type="InterPro" id="IPR003815">
    <property type="entry name" value="S-ribosylhomocysteinase"/>
</dbReference>
<dbReference type="NCBIfam" id="NF002603">
    <property type="entry name" value="PRK02260.1-3"/>
    <property type="match status" value="1"/>
</dbReference>
<dbReference type="PANTHER" id="PTHR35799">
    <property type="entry name" value="S-RIBOSYLHOMOCYSTEINE LYASE"/>
    <property type="match status" value="1"/>
</dbReference>
<dbReference type="PANTHER" id="PTHR35799:SF1">
    <property type="entry name" value="S-RIBOSYLHOMOCYSTEINE LYASE"/>
    <property type="match status" value="1"/>
</dbReference>
<dbReference type="Pfam" id="PF02664">
    <property type="entry name" value="LuxS"/>
    <property type="match status" value="1"/>
</dbReference>
<dbReference type="PIRSF" id="PIRSF006160">
    <property type="entry name" value="AI2"/>
    <property type="match status" value="1"/>
</dbReference>
<dbReference type="PRINTS" id="PR01487">
    <property type="entry name" value="LUXSPROTEIN"/>
</dbReference>
<dbReference type="SUPFAM" id="SSF63411">
    <property type="entry name" value="LuxS/MPP-like metallohydrolase"/>
    <property type="match status" value="1"/>
</dbReference>
<comment type="function">
    <text evidence="1">Involved in the synthesis of autoinducer 2 (AI-2) which is secreted by bacteria and is used to communicate both the cell density and the metabolic potential of the environment. The regulation of gene expression in response to changes in cell density is called quorum sensing. Catalyzes the transformation of S-ribosylhomocysteine (RHC) to homocysteine (HC) and 4,5-dihydroxy-2,3-pentadione (DPD).</text>
</comment>
<comment type="catalytic activity">
    <reaction evidence="1">
        <text>S-(5-deoxy-D-ribos-5-yl)-L-homocysteine = (S)-4,5-dihydroxypentane-2,3-dione + L-homocysteine</text>
        <dbReference type="Rhea" id="RHEA:17753"/>
        <dbReference type="ChEBI" id="CHEBI:29484"/>
        <dbReference type="ChEBI" id="CHEBI:58195"/>
        <dbReference type="ChEBI" id="CHEBI:58199"/>
        <dbReference type="EC" id="4.4.1.21"/>
    </reaction>
</comment>
<comment type="cofactor">
    <cofactor evidence="1">
        <name>Fe cation</name>
        <dbReference type="ChEBI" id="CHEBI:24875"/>
    </cofactor>
    <text evidence="1">Binds 1 Fe cation per subunit.</text>
</comment>
<comment type="subunit">
    <text evidence="1">Homodimer.</text>
</comment>
<comment type="similarity">
    <text evidence="1">Belongs to the LuxS family.</text>
</comment>